<feature type="chain" id="PRO_0000346046" description="Protoheme IX farnesyltransferase">
    <location>
        <begin position="1"/>
        <end position="313"/>
    </location>
</feature>
<feature type="transmembrane region" description="Helical" evidence="1">
    <location>
        <begin position="33"/>
        <end position="53"/>
    </location>
</feature>
<feature type="transmembrane region" description="Helical" evidence="1">
    <location>
        <begin position="59"/>
        <end position="79"/>
    </location>
</feature>
<feature type="transmembrane region" description="Helical" evidence="1">
    <location>
        <begin position="107"/>
        <end position="127"/>
    </location>
</feature>
<feature type="transmembrane region" description="Helical" evidence="1">
    <location>
        <begin position="129"/>
        <end position="149"/>
    </location>
</feature>
<feature type="transmembrane region" description="Helical" evidence="1">
    <location>
        <begin position="162"/>
        <end position="182"/>
    </location>
</feature>
<feature type="transmembrane region" description="Helical" evidence="1">
    <location>
        <begin position="188"/>
        <end position="208"/>
    </location>
</feature>
<feature type="transmembrane region" description="Helical" evidence="1">
    <location>
        <begin position="212"/>
        <end position="232"/>
    </location>
</feature>
<feature type="transmembrane region" description="Helical" evidence="1">
    <location>
        <begin position="252"/>
        <end position="272"/>
    </location>
</feature>
<feature type="transmembrane region" description="Helical" evidence="1">
    <location>
        <begin position="292"/>
        <end position="312"/>
    </location>
</feature>
<keyword id="KW-1003">Cell membrane</keyword>
<keyword id="KW-0350">Heme biosynthesis</keyword>
<keyword id="KW-0472">Membrane</keyword>
<keyword id="KW-0808">Transferase</keyword>
<keyword id="KW-0812">Transmembrane</keyword>
<keyword id="KW-1133">Transmembrane helix</keyword>
<organism>
    <name type="scientific">Parafrankia sp. (strain EAN1pec)</name>
    <dbReference type="NCBI Taxonomy" id="298653"/>
    <lineage>
        <taxon>Bacteria</taxon>
        <taxon>Bacillati</taxon>
        <taxon>Actinomycetota</taxon>
        <taxon>Actinomycetes</taxon>
        <taxon>Frankiales</taxon>
        <taxon>Frankiaceae</taxon>
        <taxon>Parafrankia</taxon>
    </lineage>
</organism>
<comment type="function">
    <text evidence="1">Converts heme B (protoheme IX) to heme O by substitution of the vinyl group on carbon 2 of heme B porphyrin ring with a hydroxyethyl farnesyl side group.</text>
</comment>
<comment type="catalytic activity">
    <reaction evidence="1">
        <text>heme b + (2E,6E)-farnesyl diphosphate + H2O = Fe(II)-heme o + diphosphate</text>
        <dbReference type="Rhea" id="RHEA:28070"/>
        <dbReference type="ChEBI" id="CHEBI:15377"/>
        <dbReference type="ChEBI" id="CHEBI:33019"/>
        <dbReference type="ChEBI" id="CHEBI:60344"/>
        <dbReference type="ChEBI" id="CHEBI:60530"/>
        <dbReference type="ChEBI" id="CHEBI:175763"/>
        <dbReference type="EC" id="2.5.1.141"/>
    </reaction>
</comment>
<comment type="pathway">
    <text evidence="1">Porphyrin-containing compound metabolism; heme O biosynthesis; heme O from protoheme: step 1/1.</text>
</comment>
<comment type="subcellular location">
    <subcellularLocation>
        <location evidence="1">Cell membrane</location>
        <topology evidence="1">Multi-pass membrane protein</topology>
    </subcellularLocation>
</comment>
<comment type="miscellaneous">
    <text evidence="1">Carbon 2 of the heme B porphyrin ring is defined according to the Fischer nomenclature.</text>
</comment>
<comment type="similarity">
    <text evidence="1">Belongs to the UbiA prenyltransferase family. Protoheme IX farnesyltransferase subfamily.</text>
</comment>
<name>COXX_PARS2</name>
<sequence>MAAPAAGAEPSSDPLVVPRGRLARATDRARSYIALMKLRVVELLLVSTVPVMLLAERGMPSWWLIAVTLLAGTLSAGSANTINCYVDRDIDQLMGRTKRRPLVREVVEPAQALRFGIALGIISTLMFGLLVNWTSAVLSVGAIAFYVFVYTLGLKRRSPSNIVIGGAAGCFPVLIGWSAVTGTVGWPAVLLFAVVFFWTPPHFWALAIRFKDDYAAAGVPMLPVVATLEVVTRRILAYSYLMVAVSLAVAPVADIGLVYLVPAVLLGAWFVAEAHRMAARAKRGEEIKPMRLFHMSITYLTLLFAALAAAALL</sequence>
<proteinExistence type="inferred from homology"/>
<accession>A8KYS6</accession>
<protein>
    <recommendedName>
        <fullName evidence="1">Protoheme IX farnesyltransferase</fullName>
        <ecNumber evidence="1">2.5.1.141</ecNumber>
    </recommendedName>
    <alternativeName>
        <fullName evidence="1">Heme B farnesyltransferase</fullName>
    </alternativeName>
    <alternativeName>
        <fullName evidence="1">Heme O synthase</fullName>
    </alternativeName>
</protein>
<gene>
    <name evidence="1" type="primary">ctaB</name>
    <name type="ordered locus">Franean1_2075</name>
</gene>
<evidence type="ECO:0000255" key="1">
    <source>
        <dbReference type="HAMAP-Rule" id="MF_00154"/>
    </source>
</evidence>
<reference key="1">
    <citation type="journal article" date="2007" name="Genome Res.">
        <title>Genome characteristics of facultatively symbiotic Frankia sp. strains reflect host range and host plant biogeography.</title>
        <authorList>
            <person name="Normand P."/>
            <person name="Lapierre P."/>
            <person name="Tisa L.S."/>
            <person name="Gogarten J.P."/>
            <person name="Alloisio N."/>
            <person name="Bagnarol E."/>
            <person name="Bassi C.A."/>
            <person name="Berry A.M."/>
            <person name="Bickhart D.M."/>
            <person name="Choisne N."/>
            <person name="Couloux A."/>
            <person name="Cournoyer B."/>
            <person name="Cruveiller S."/>
            <person name="Daubin V."/>
            <person name="Demange N."/>
            <person name="Francino M.P."/>
            <person name="Goltsman E."/>
            <person name="Huang Y."/>
            <person name="Kopp O.R."/>
            <person name="Labarre L."/>
            <person name="Lapidus A."/>
            <person name="Lavire C."/>
            <person name="Marechal J."/>
            <person name="Martinez M."/>
            <person name="Mastronunzio J.E."/>
            <person name="Mullin B.C."/>
            <person name="Niemann J."/>
            <person name="Pujic P."/>
            <person name="Rawnsley T."/>
            <person name="Rouy Z."/>
            <person name="Schenowitz C."/>
            <person name="Sellstedt A."/>
            <person name="Tavares F."/>
            <person name="Tomkins J.P."/>
            <person name="Vallenet D."/>
            <person name="Valverde C."/>
            <person name="Wall L.G."/>
            <person name="Wang Y."/>
            <person name="Medigue C."/>
            <person name="Benson D.R."/>
        </authorList>
    </citation>
    <scope>NUCLEOTIDE SEQUENCE [LARGE SCALE GENOMIC DNA]</scope>
    <source>
        <strain>EAN1pec</strain>
    </source>
</reference>
<dbReference type="EC" id="2.5.1.141" evidence="1"/>
<dbReference type="EMBL" id="CP000820">
    <property type="protein sequence ID" value="ABW11512.1"/>
    <property type="molecule type" value="Genomic_DNA"/>
</dbReference>
<dbReference type="RefSeq" id="WP_020459678.1">
    <property type="nucleotide sequence ID" value="NC_009921.1"/>
</dbReference>
<dbReference type="SMR" id="A8KYS6"/>
<dbReference type="STRING" id="298653.Franean1_2075"/>
<dbReference type="KEGG" id="fre:Franean1_2075"/>
<dbReference type="eggNOG" id="COG0109">
    <property type="taxonomic scope" value="Bacteria"/>
</dbReference>
<dbReference type="HOGENOM" id="CLU_029631_0_1_11"/>
<dbReference type="UniPathway" id="UPA00834">
    <property type="reaction ID" value="UER00712"/>
</dbReference>
<dbReference type="GO" id="GO:0005886">
    <property type="term" value="C:plasma membrane"/>
    <property type="evidence" value="ECO:0007669"/>
    <property type="project" value="UniProtKB-SubCell"/>
</dbReference>
<dbReference type="GO" id="GO:0008495">
    <property type="term" value="F:protoheme IX farnesyltransferase activity"/>
    <property type="evidence" value="ECO:0007669"/>
    <property type="project" value="UniProtKB-UniRule"/>
</dbReference>
<dbReference type="GO" id="GO:0048034">
    <property type="term" value="P:heme O biosynthetic process"/>
    <property type="evidence" value="ECO:0007669"/>
    <property type="project" value="UniProtKB-UniRule"/>
</dbReference>
<dbReference type="CDD" id="cd13957">
    <property type="entry name" value="PT_UbiA_Cox10"/>
    <property type="match status" value="1"/>
</dbReference>
<dbReference type="FunFam" id="1.10.357.140:FF:000001">
    <property type="entry name" value="Protoheme IX farnesyltransferase"/>
    <property type="match status" value="1"/>
</dbReference>
<dbReference type="Gene3D" id="1.10.357.140">
    <property type="entry name" value="UbiA prenyltransferase"/>
    <property type="match status" value="1"/>
</dbReference>
<dbReference type="HAMAP" id="MF_00154">
    <property type="entry name" value="CyoE_CtaB"/>
    <property type="match status" value="1"/>
</dbReference>
<dbReference type="InterPro" id="IPR006369">
    <property type="entry name" value="Protohaem_IX_farnesylTrfase"/>
</dbReference>
<dbReference type="InterPro" id="IPR000537">
    <property type="entry name" value="UbiA_prenyltransferase"/>
</dbReference>
<dbReference type="InterPro" id="IPR044878">
    <property type="entry name" value="UbiA_sf"/>
</dbReference>
<dbReference type="NCBIfam" id="TIGR01473">
    <property type="entry name" value="cyoE_ctaB"/>
    <property type="match status" value="1"/>
</dbReference>
<dbReference type="NCBIfam" id="NF003349">
    <property type="entry name" value="PRK04375.1-2"/>
    <property type="match status" value="1"/>
</dbReference>
<dbReference type="PANTHER" id="PTHR43448:SF7">
    <property type="entry name" value="4-HYDROXYBENZOATE SOLANESYLTRANSFERASE"/>
    <property type="match status" value="1"/>
</dbReference>
<dbReference type="PANTHER" id="PTHR43448">
    <property type="entry name" value="PROTOHEME IX FARNESYLTRANSFERASE, MITOCHONDRIAL"/>
    <property type="match status" value="1"/>
</dbReference>
<dbReference type="Pfam" id="PF01040">
    <property type="entry name" value="UbiA"/>
    <property type="match status" value="1"/>
</dbReference>